<keyword id="KW-0456">Lyase</keyword>
<keyword id="KW-0659">Purine metabolism</keyword>
<keyword id="KW-1185">Reference proteome</keyword>
<proteinExistence type="inferred from homology"/>
<reference key="1">
    <citation type="journal article" date="2006" name="Proc. Natl. Acad. Sci. U.S.A.">
        <title>The partitioned Rhizobium etli genome: genetic and metabolic redundancy in seven interacting replicons.</title>
        <authorList>
            <person name="Gonzalez V."/>
            <person name="Santamaria R.I."/>
            <person name="Bustos P."/>
            <person name="Hernandez-Gonzalez I."/>
            <person name="Medrano-Soto A."/>
            <person name="Moreno-Hagelsieb G."/>
            <person name="Janga S.C."/>
            <person name="Ramirez M.A."/>
            <person name="Jimenez-Jacinto V."/>
            <person name="Collado-Vides J."/>
            <person name="Davila G."/>
        </authorList>
    </citation>
    <scope>NUCLEOTIDE SEQUENCE [LARGE SCALE GENOMIC DNA]</scope>
    <source>
        <strain>ATCC 51251 / DSM 11541 / JCM 21823 / NBRC 15573 / CFN 42</strain>
    </source>
</reference>
<evidence type="ECO:0000255" key="1">
    <source>
        <dbReference type="HAMAP-Rule" id="MF_00616"/>
    </source>
</evidence>
<accession>Q2K5I1</accession>
<comment type="function">
    <text evidence="1">Catalyzes the catabolism of the allantoin degradation intermediate (S)-ureidoglycolate, generating urea and glyoxylate. Involved in the utilization of allantoin as nitrogen source.</text>
</comment>
<comment type="catalytic activity">
    <reaction evidence="1">
        <text>(S)-ureidoglycolate = urea + glyoxylate</text>
        <dbReference type="Rhea" id="RHEA:11304"/>
        <dbReference type="ChEBI" id="CHEBI:16199"/>
        <dbReference type="ChEBI" id="CHEBI:36655"/>
        <dbReference type="ChEBI" id="CHEBI:57296"/>
        <dbReference type="EC" id="4.3.2.3"/>
    </reaction>
</comment>
<comment type="cofactor">
    <cofactor evidence="1">
        <name>Ni(2+)</name>
        <dbReference type="ChEBI" id="CHEBI:49786"/>
    </cofactor>
</comment>
<comment type="pathway">
    <text evidence="1">Nitrogen metabolism; (S)-allantoin degradation.</text>
</comment>
<comment type="subunit">
    <text evidence="1">Homodimer.</text>
</comment>
<comment type="similarity">
    <text evidence="1">Belongs to the ureidoglycolate lyase family.</text>
</comment>
<dbReference type="EC" id="4.3.2.3" evidence="1"/>
<dbReference type="EMBL" id="CP000133">
    <property type="protein sequence ID" value="ABC91905.1"/>
    <property type="molecule type" value="Genomic_DNA"/>
</dbReference>
<dbReference type="RefSeq" id="WP_011426375.1">
    <property type="nucleotide sequence ID" value="NC_007761.1"/>
</dbReference>
<dbReference type="SMR" id="Q2K5I1"/>
<dbReference type="KEGG" id="ret:RHE_CH03139"/>
<dbReference type="eggNOG" id="COG3194">
    <property type="taxonomic scope" value="Bacteria"/>
</dbReference>
<dbReference type="HOGENOM" id="CLU_070848_1_0_5"/>
<dbReference type="OrthoDB" id="9804602at2"/>
<dbReference type="UniPathway" id="UPA00395"/>
<dbReference type="Proteomes" id="UP000001936">
    <property type="component" value="Chromosome"/>
</dbReference>
<dbReference type="GO" id="GO:0004848">
    <property type="term" value="F:ureidoglycolate hydrolase activity"/>
    <property type="evidence" value="ECO:0007669"/>
    <property type="project" value="InterPro"/>
</dbReference>
<dbReference type="GO" id="GO:0050385">
    <property type="term" value="F:ureidoglycolate lyase activity"/>
    <property type="evidence" value="ECO:0007669"/>
    <property type="project" value="UniProtKB-UniRule"/>
</dbReference>
<dbReference type="GO" id="GO:0000256">
    <property type="term" value="P:allantoin catabolic process"/>
    <property type="evidence" value="ECO:0007669"/>
    <property type="project" value="UniProtKB-UniRule"/>
</dbReference>
<dbReference type="GO" id="GO:0006145">
    <property type="term" value="P:purine nucleobase catabolic process"/>
    <property type="evidence" value="ECO:0007669"/>
    <property type="project" value="UniProtKB-UniRule"/>
</dbReference>
<dbReference type="CDD" id="cd20298">
    <property type="entry name" value="cupin_UAH"/>
    <property type="match status" value="1"/>
</dbReference>
<dbReference type="Gene3D" id="2.60.120.480">
    <property type="entry name" value="Ureidoglycolate hydrolase"/>
    <property type="match status" value="1"/>
</dbReference>
<dbReference type="HAMAP" id="MF_00616">
    <property type="entry name" value="Ureidogly_lyase"/>
    <property type="match status" value="1"/>
</dbReference>
<dbReference type="InterPro" id="IPR011051">
    <property type="entry name" value="RmlC_Cupin_sf"/>
</dbReference>
<dbReference type="InterPro" id="IPR047233">
    <property type="entry name" value="UAH_cupin"/>
</dbReference>
<dbReference type="InterPro" id="IPR007247">
    <property type="entry name" value="Ureidogly_lyase"/>
</dbReference>
<dbReference type="InterPro" id="IPR023525">
    <property type="entry name" value="Ureidogly_lyase_bac"/>
</dbReference>
<dbReference type="InterPro" id="IPR024060">
    <property type="entry name" value="Ureidoglycolate_lyase_dom_sf"/>
</dbReference>
<dbReference type="NCBIfam" id="NF002951">
    <property type="entry name" value="PRK03606.2-2"/>
    <property type="match status" value="1"/>
</dbReference>
<dbReference type="NCBIfam" id="NF009932">
    <property type="entry name" value="PRK13395.1"/>
    <property type="match status" value="1"/>
</dbReference>
<dbReference type="PANTHER" id="PTHR21221">
    <property type="entry name" value="UREIDOGLYCOLATE HYDROLASE"/>
    <property type="match status" value="1"/>
</dbReference>
<dbReference type="PANTHER" id="PTHR21221:SF1">
    <property type="entry name" value="UREIDOGLYCOLATE LYASE"/>
    <property type="match status" value="1"/>
</dbReference>
<dbReference type="Pfam" id="PF04115">
    <property type="entry name" value="Ureidogly_lyase"/>
    <property type="match status" value="1"/>
</dbReference>
<dbReference type="PIRSF" id="PIRSF017306">
    <property type="entry name" value="Ureidogly_hydro"/>
    <property type="match status" value="1"/>
</dbReference>
<dbReference type="SUPFAM" id="SSF51182">
    <property type="entry name" value="RmlC-like cupins"/>
    <property type="match status" value="1"/>
</dbReference>
<sequence length="166" mass="18453">MPEFLDIRPLTRSAFAPFGEVIEADPASMRLINGGTTERFHALAAAEAAGEGARVIINLFRGQPRSFPYDVDMMERHPFGSQSFSPISGRPFLVVVSEDEGGRPGKPQVFFARGDQGVNYRRNVWHHPLMALGQTSDFLVVDRDGLGNNLEEFFFETPFVIKEPAP</sequence>
<protein>
    <recommendedName>
        <fullName evidence="1">Ureidoglycolate lyase</fullName>
        <ecNumber evidence="1">4.3.2.3</ecNumber>
    </recommendedName>
    <alternativeName>
        <fullName evidence="1">Ureidoglycolatase</fullName>
    </alternativeName>
</protein>
<gene>
    <name evidence="1" type="primary">allA</name>
    <name type="ordered locus">RHE_CH03139</name>
</gene>
<name>ALLA_RHIEC</name>
<feature type="chain" id="PRO_1000061367" description="Ureidoglycolate lyase">
    <location>
        <begin position="1"/>
        <end position="166"/>
    </location>
</feature>
<organism>
    <name type="scientific">Rhizobium etli (strain ATCC 51251 / DSM 11541 / JCM 21823 / NBRC 15573 / CFN 42)</name>
    <dbReference type="NCBI Taxonomy" id="347834"/>
    <lineage>
        <taxon>Bacteria</taxon>
        <taxon>Pseudomonadati</taxon>
        <taxon>Pseudomonadota</taxon>
        <taxon>Alphaproteobacteria</taxon>
        <taxon>Hyphomicrobiales</taxon>
        <taxon>Rhizobiaceae</taxon>
        <taxon>Rhizobium/Agrobacterium group</taxon>
        <taxon>Rhizobium</taxon>
    </lineage>
</organism>